<proteinExistence type="inferred from homology"/>
<gene>
    <name evidence="1" type="primary">rplP</name>
    <name type="ordered locus">Nham_1552</name>
</gene>
<protein>
    <recommendedName>
        <fullName evidence="1">Large ribosomal subunit protein uL16</fullName>
    </recommendedName>
    <alternativeName>
        <fullName evidence="2">50S ribosomal protein L16</fullName>
    </alternativeName>
</protein>
<name>RL16_NITHX</name>
<dbReference type="EMBL" id="CP000319">
    <property type="protein sequence ID" value="ABE62374.1"/>
    <property type="molecule type" value="Genomic_DNA"/>
</dbReference>
<dbReference type="RefSeq" id="WP_011510061.1">
    <property type="nucleotide sequence ID" value="NC_007964.1"/>
</dbReference>
<dbReference type="SMR" id="Q1QN23"/>
<dbReference type="STRING" id="323097.Nham_1552"/>
<dbReference type="KEGG" id="nha:Nham_1552"/>
<dbReference type="eggNOG" id="COG0197">
    <property type="taxonomic scope" value="Bacteria"/>
</dbReference>
<dbReference type="HOGENOM" id="CLU_078858_2_1_5"/>
<dbReference type="OrthoDB" id="9802589at2"/>
<dbReference type="Proteomes" id="UP000001953">
    <property type="component" value="Chromosome"/>
</dbReference>
<dbReference type="GO" id="GO:0022625">
    <property type="term" value="C:cytosolic large ribosomal subunit"/>
    <property type="evidence" value="ECO:0007669"/>
    <property type="project" value="TreeGrafter"/>
</dbReference>
<dbReference type="GO" id="GO:0019843">
    <property type="term" value="F:rRNA binding"/>
    <property type="evidence" value="ECO:0007669"/>
    <property type="project" value="UniProtKB-UniRule"/>
</dbReference>
<dbReference type="GO" id="GO:0003735">
    <property type="term" value="F:structural constituent of ribosome"/>
    <property type="evidence" value="ECO:0007669"/>
    <property type="project" value="InterPro"/>
</dbReference>
<dbReference type="GO" id="GO:0000049">
    <property type="term" value="F:tRNA binding"/>
    <property type="evidence" value="ECO:0007669"/>
    <property type="project" value="UniProtKB-KW"/>
</dbReference>
<dbReference type="GO" id="GO:0006412">
    <property type="term" value="P:translation"/>
    <property type="evidence" value="ECO:0007669"/>
    <property type="project" value="UniProtKB-UniRule"/>
</dbReference>
<dbReference type="CDD" id="cd01433">
    <property type="entry name" value="Ribosomal_L16_L10e"/>
    <property type="match status" value="1"/>
</dbReference>
<dbReference type="FunFam" id="3.90.1170.10:FF:000001">
    <property type="entry name" value="50S ribosomal protein L16"/>
    <property type="match status" value="1"/>
</dbReference>
<dbReference type="Gene3D" id="3.90.1170.10">
    <property type="entry name" value="Ribosomal protein L10e/L16"/>
    <property type="match status" value="1"/>
</dbReference>
<dbReference type="HAMAP" id="MF_01342">
    <property type="entry name" value="Ribosomal_uL16"/>
    <property type="match status" value="1"/>
</dbReference>
<dbReference type="InterPro" id="IPR047873">
    <property type="entry name" value="Ribosomal_uL16"/>
</dbReference>
<dbReference type="InterPro" id="IPR000114">
    <property type="entry name" value="Ribosomal_uL16_bact-type"/>
</dbReference>
<dbReference type="InterPro" id="IPR020798">
    <property type="entry name" value="Ribosomal_uL16_CS"/>
</dbReference>
<dbReference type="InterPro" id="IPR016180">
    <property type="entry name" value="Ribosomal_uL16_dom"/>
</dbReference>
<dbReference type="InterPro" id="IPR036920">
    <property type="entry name" value="Ribosomal_uL16_sf"/>
</dbReference>
<dbReference type="NCBIfam" id="TIGR01164">
    <property type="entry name" value="rplP_bact"/>
    <property type="match status" value="1"/>
</dbReference>
<dbReference type="PANTHER" id="PTHR12220">
    <property type="entry name" value="50S/60S RIBOSOMAL PROTEIN L16"/>
    <property type="match status" value="1"/>
</dbReference>
<dbReference type="PANTHER" id="PTHR12220:SF13">
    <property type="entry name" value="LARGE RIBOSOMAL SUBUNIT PROTEIN UL16M"/>
    <property type="match status" value="1"/>
</dbReference>
<dbReference type="Pfam" id="PF00252">
    <property type="entry name" value="Ribosomal_L16"/>
    <property type="match status" value="1"/>
</dbReference>
<dbReference type="PRINTS" id="PR00060">
    <property type="entry name" value="RIBOSOMALL16"/>
</dbReference>
<dbReference type="SUPFAM" id="SSF54686">
    <property type="entry name" value="Ribosomal protein L16p/L10e"/>
    <property type="match status" value="1"/>
</dbReference>
<dbReference type="PROSITE" id="PS00586">
    <property type="entry name" value="RIBOSOMAL_L16_1"/>
    <property type="match status" value="1"/>
</dbReference>
<dbReference type="PROSITE" id="PS00701">
    <property type="entry name" value="RIBOSOMAL_L16_2"/>
    <property type="match status" value="1"/>
</dbReference>
<comment type="function">
    <text evidence="1">Binds 23S rRNA and is also seen to make contacts with the A and possibly P site tRNAs.</text>
</comment>
<comment type="subunit">
    <text evidence="1">Part of the 50S ribosomal subunit.</text>
</comment>
<comment type="similarity">
    <text evidence="1">Belongs to the universal ribosomal protein uL16 family.</text>
</comment>
<evidence type="ECO:0000255" key="1">
    <source>
        <dbReference type="HAMAP-Rule" id="MF_01342"/>
    </source>
</evidence>
<evidence type="ECO:0000305" key="2"/>
<sequence length="137" mass="15010">MMQPKKTKFRKAHKGRIHGTASSGATLAFGQFGLKAMAPERISARQIEAARRALTRHMKRAGRVWIRVFPDVPVSKKPAEVRMGSGKGAPELWVVRVKPGRVLFEIDGVGAQTAKEALTLAAAKLPIKTRFVARIAE</sequence>
<accession>Q1QN23</accession>
<feature type="chain" id="PRO_0000251650" description="Large ribosomal subunit protein uL16">
    <location>
        <begin position="1"/>
        <end position="137"/>
    </location>
</feature>
<reference key="1">
    <citation type="submission" date="2006-03" db="EMBL/GenBank/DDBJ databases">
        <title>Complete sequence of chromosome of Nitrobacter hamburgensis X14.</title>
        <authorList>
            <consortium name="US DOE Joint Genome Institute"/>
            <person name="Copeland A."/>
            <person name="Lucas S."/>
            <person name="Lapidus A."/>
            <person name="Barry K."/>
            <person name="Detter J.C."/>
            <person name="Glavina del Rio T."/>
            <person name="Hammon N."/>
            <person name="Israni S."/>
            <person name="Dalin E."/>
            <person name="Tice H."/>
            <person name="Pitluck S."/>
            <person name="Chain P."/>
            <person name="Malfatti S."/>
            <person name="Shin M."/>
            <person name="Vergez L."/>
            <person name="Schmutz J."/>
            <person name="Larimer F."/>
            <person name="Land M."/>
            <person name="Hauser L."/>
            <person name="Kyrpides N."/>
            <person name="Ivanova N."/>
            <person name="Ward B."/>
            <person name="Arp D."/>
            <person name="Klotz M."/>
            <person name="Stein L."/>
            <person name="O'Mullan G."/>
            <person name="Starkenburg S."/>
            <person name="Sayavedra L."/>
            <person name="Poret-Peterson A.T."/>
            <person name="Gentry M.E."/>
            <person name="Bruce D."/>
            <person name="Richardson P."/>
        </authorList>
    </citation>
    <scope>NUCLEOTIDE SEQUENCE [LARGE SCALE GENOMIC DNA]</scope>
    <source>
        <strain>DSM 10229 / NCIMB 13809 / X14</strain>
    </source>
</reference>
<organism>
    <name type="scientific">Nitrobacter hamburgensis (strain DSM 10229 / NCIMB 13809 / X14)</name>
    <dbReference type="NCBI Taxonomy" id="323097"/>
    <lineage>
        <taxon>Bacteria</taxon>
        <taxon>Pseudomonadati</taxon>
        <taxon>Pseudomonadota</taxon>
        <taxon>Alphaproteobacteria</taxon>
        <taxon>Hyphomicrobiales</taxon>
        <taxon>Nitrobacteraceae</taxon>
        <taxon>Nitrobacter</taxon>
    </lineage>
</organism>
<keyword id="KW-1185">Reference proteome</keyword>
<keyword id="KW-0687">Ribonucleoprotein</keyword>
<keyword id="KW-0689">Ribosomal protein</keyword>
<keyword id="KW-0694">RNA-binding</keyword>
<keyword id="KW-0699">rRNA-binding</keyword>
<keyword id="KW-0820">tRNA-binding</keyword>